<protein>
    <recommendedName>
        <fullName evidence="1">Methylglyoxal synthase</fullName>
        <shortName evidence="1">MGS</shortName>
        <ecNumber evidence="1">4.2.3.3</ecNumber>
    </recommendedName>
</protein>
<accession>Q5E4D0</accession>
<evidence type="ECO:0000255" key="1">
    <source>
        <dbReference type="HAMAP-Rule" id="MF_00549"/>
    </source>
</evidence>
<gene>
    <name evidence="1" type="primary">mgsA</name>
    <name type="ordered locus">VF_1621</name>
</gene>
<keyword id="KW-0456">Lyase</keyword>
<keyword id="KW-1185">Reference proteome</keyword>
<dbReference type="EC" id="4.2.3.3" evidence="1"/>
<dbReference type="EMBL" id="CP000020">
    <property type="protein sequence ID" value="AAW86116.1"/>
    <property type="molecule type" value="Genomic_DNA"/>
</dbReference>
<dbReference type="RefSeq" id="WP_005419907.1">
    <property type="nucleotide sequence ID" value="NZ_CAWLES010000001.1"/>
</dbReference>
<dbReference type="RefSeq" id="YP_205004.1">
    <property type="nucleotide sequence ID" value="NC_006840.2"/>
</dbReference>
<dbReference type="SMR" id="Q5E4D0"/>
<dbReference type="STRING" id="312309.VF_1621"/>
<dbReference type="EnsemblBacteria" id="AAW86116">
    <property type="protein sequence ID" value="AAW86116"/>
    <property type="gene ID" value="VF_1621"/>
</dbReference>
<dbReference type="GeneID" id="54164307"/>
<dbReference type="KEGG" id="vfi:VF_1621"/>
<dbReference type="PATRIC" id="fig|312309.11.peg.1642"/>
<dbReference type="eggNOG" id="COG1803">
    <property type="taxonomic scope" value="Bacteria"/>
</dbReference>
<dbReference type="HOGENOM" id="CLU_120420_0_1_6"/>
<dbReference type="OrthoDB" id="9787147at2"/>
<dbReference type="Proteomes" id="UP000000537">
    <property type="component" value="Chromosome I"/>
</dbReference>
<dbReference type="GO" id="GO:0005829">
    <property type="term" value="C:cytosol"/>
    <property type="evidence" value="ECO:0007669"/>
    <property type="project" value="TreeGrafter"/>
</dbReference>
<dbReference type="GO" id="GO:0008929">
    <property type="term" value="F:methylglyoxal synthase activity"/>
    <property type="evidence" value="ECO:0007669"/>
    <property type="project" value="UniProtKB-UniRule"/>
</dbReference>
<dbReference type="GO" id="GO:0019242">
    <property type="term" value="P:methylglyoxal biosynthetic process"/>
    <property type="evidence" value="ECO:0007669"/>
    <property type="project" value="UniProtKB-UniRule"/>
</dbReference>
<dbReference type="CDD" id="cd01422">
    <property type="entry name" value="MGS"/>
    <property type="match status" value="1"/>
</dbReference>
<dbReference type="FunFam" id="3.40.50.1380:FF:000002">
    <property type="entry name" value="Methylglyoxal synthase"/>
    <property type="match status" value="1"/>
</dbReference>
<dbReference type="Gene3D" id="3.40.50.1380">
    <property type="entry name" value="Methylglyoxal synthase-like domain"/>
    <property type="match status" value="1"/>
</dbReference>
<dbReference type="HAMAP" id="MF_00549">
    <property type="entry name" value="Methylglyoxal_synth"/>
    <property type="match status" value="1"/>
</dbReference>
<dbReference type="InterPro" id="IPR004363">
    <property type="entry name" value="Methylgl_synth"/>
</dbReference>
<dbReference type="InterPro" id="IPR018148">
    <property type="entry name" value="Methylglyoxal_synth_AS"/>
</dbReference>
<dbReference type="InterPro" id="IPR011607">
    <property type="entry name" value="MGS-like_dom"/>
</dbReference>
<dbReference type="InterPro" id="IPR036914">
    <property type="entry name" value="MGS-like_dom_sf"/>
</dbReference>
<dbReference type="NCBIfam" id="TIGR00160">
    <property type="entry name" value="MGSA"/>
    <property type="match status" value="1"/>
</dbReference>
<dbReference type="NCBIfam" id="NF003559">
    <property type="entry name" value="PRK05234.1"/>
    <property type="match status" value="1"/>
</dbReference>
<dbReference type="PANTHER" id="PTHR30492">
    <property type="entry name" value="METHYLGLYOXAL SYNTHASE"/>
    <property type="match status" value="1"/>
</dbReference>
<dbReference type="PANTHER" id="PTHR30492:SF0">
    <property type="entry name" value="METHYLGLYOXAL SYNTHASE"/>
    <property type="match status" value="1"/>
</dbReference>
<dbReference type="Pfam" id="PF02142">
    <property type="entry name" value="MGS"/>
    <property type="match status" value="1"/>
</dbReference>
<dbReference type="PIRSF" id="PIRSF006614">
    <property type="entry name" value="Methylglyox_syn"/>
    <property type="match status" value="1"/>
</dbReference>
<dbReference type="SMART" id="SM00851">
    <property type="entry name" value="MGS"/>
    <property type="match status" value="1"/>
</dbReference>
<dbReference type="SUPFAM" id="SSF52335">
    <property type="entry name" value="Methylglyoxal synthase-like"/>
    <property type="match status" value="1"/>
</dbReference>
<dbReference type="PROSITE" id="PS01335">
    <property type="entry name" value="METHYLGLYOXAL_SYNTH"/>
    <property type="match status" value="1"/>
</dbReference>
<dbReference type="PROSITE" id="PS51855">
    <property type="entry name" value="MGS"/>
    <property type="match status" value="1"/>
</dbReference>
<comment type="function">
    <text evidence="1">Catalyzes the formation of methylglyoxal from dihydroxyacetone phosphate.</text>
</comment>
<comment type="catalytic activity">
    <reaction evidence="1">
        <text>dihydroxyacetone phosphate = methylglyoxal + phosphate</text>
        <dbReference type="Rhea" id="RHEA:17937"/>
        <dbReference type="ChEBI" id="CHEBI:17158"/>
        <dbReference type="ChEBI" id="CHEBI:43474"/>
        <dbReference type="ChEBI" id="CHEBI:57642"/>
        <dbReference type="EC" id="4.2.3.3"/>
    </reaction>
</comment>
<comment type="similarity">
    <text evidence="1">Belongs to the methylglyoxal synthase family.</text>
</comment>
<feature type="chain" id="PRO_1000017831" description="Methylglyoxal synthase">
    <location>
        <begin position="1"/>
        <end position="151"/>
    </location>
</feature>
<feature type="domain" description="MGS-like" evidence="1">
    <location>
        <begin position="6"/>
        <end position="151"/>
    </location>
</feature>
<feature type="active site" description="Proton donor/acceptor" evidence="1">
    <location>
        <position position="71"/>
    </location>
</feature>
<feature type="binding site" evidence="1">
    <location>
        <position position="19"/>
    </location>
    <ligand>
        <name>substrate</name>
    </ligand>
</feature>
<feature type="binding site" evidence="1">
    <location>
        <position position="23"/>
    </location>
    <ligand>
        <name>substrate</name>
    </ligand>
</feature>
<feature type="binding site" evidence="1">
    <location>
        <begin position="45"/>
        <end position="48"/>
    </location>
    <ligand>
        <name>substrate</name>
    </ligand>
</feature>
<feature type="binding site" evidence="1">
    <location>
        <begin position="65"/>
        <end position="66"/>
    </location>
    <ligand>
        <name>substrate</name>
    </ligand>
</feature>
<feature type="binding site" evidence="1">
    <location>
        <position position="98"/>
    </location>
    <ligand>
        <name>substrate</name>
    </ligand>
</feature>
<sequence>MNKTTRVMPAHKHIALVAHDNYKPELLRWVKENKDALQGHFLYATGTTGRILSKETGLAIKSLLSGPMGGDQQLGALISEGKIDMMIFFWDPLNAVPHDPDVKALLRIATVWNVPVAMNRASAKFMISAPQMEEEVSIEIPDYDAYLAERV</sequence>
<organism>
    <name type="scientific">Aliivibrio fischeri (strain ATCC 700601 / ES114)</name>
    <name type="common">Vibrio fischeri</name>
    <dbReference type="NCBI Taxonomy" id="312309"/>
    <lineage>
        <taxon>Bacteria</taxon>
        <taxon>Pseudomonadati</taxon>
        <taxon>Pseudomonadota</taxon>
        <taxon>Gammaproteobacteria</taxon>
        <taxon>Vibrionales</taxon>
        <taxon>Vibrionaceae</taxon>
        <taxon>Aliivibrio</taxon>
    </lineage>
</organism>
<proteinExistence type="inferred from homology"/>
<reference key="1">
    <citation type="journal article" date="2005" name="Proc. Natl. Acad. Sci. U.S.A.">
        <title>Complete genome sequence of Vibrio fischeri: a symbiotic bacterium with pathogenic congeners.</title>
        <authorList>
            <person name="Ruby E.G."/>
            <person name="Urbanowski M."/>
            <person name="Campbell J."/>
            <person name="Dunn A."/>
            <person name="Faini M."/>
            <person name="Gunsalus R."/>
            <person name="Lostroh P."/>
            <person name="Lupp C."/>
            <person name="McCann J."/>
            <person name="Millikan D."/>
            <person name="Schaefer A."/>
            <person name="Stabb E."/>
            <person name="Stevens A."/>
            <person name="Visick K."/>
            <person name="Whistler C."/>
            <person name="Greenberg E.P."/>
        </authorList>
    </citation>
    <scope>NUCLEOTIDE SEQUENCE [LARGE SCALE GENOMIC DNA]</scope>
    <source>
        <strain>ATCC 700601 / ES114</strain>
    </source>
</reference>
<name>MGSA_ALIF1</name>